<name>GASAB_ARATH</name>
<proteinExistence type="inferred from homology"/>
<protein>
    <recommendedName>
        <fullName>Gibberellin-regulated protein 11</fullName>
    </recommendedName>
    <alternativeName>
        <fullName>GAST1 protein homolog 11</fullName>
    </alternativeName>
</protein>
<evidence type="ECO:0000250" key="1"/>
<evidence type="ECO:0000255" key="2"/>
<evidence type="ECO:0000305" key="3"/>
<reference key="1">
    <citation type="journal article" date="1999" name="Nature">
        <title>Sequence and analysis of chromosome 2 of the plant Arabidopsis thaliana.</title>
        <authorList>
            <person name="Lin X."/>
            <person name="Kaul S."/>
            <person name="Rounsley S.D."/>
            <person name="Shea T.P."/>
            <person name="Benito M.-I."/>
            <person name="Town C.D."/>
            <person name="Fujii C.Y."/>
            <person name="Mason T.M."/>
            <person name="Bowman C.L."/>
            <person name="Barnstead M.E."/>
            <person name="Feldblyum T.V."/>
            <person name="Buell C.R."/>
            <person name="Ketchum K.A."/>
            <person name="Lee J.J."/>
            <person name="Ronning C.M."/>
            <person name="Koo H.L."/>
            <person name="Moffat K.S."/>
            <person name="Cronin L.A."/>
            <person name="Shen M."/>
            <person name="Pai G."/>
            <person name="Van Aken S."/>
            <person name="Umayam L."/>
            <person name="Tallon L.J."/>
            <person name="Gill J.E."/>
            <person name="Adams M.D."/>
            <person name="Carrera A.J."/>
            <person name="Creasy T.H."/>
            <person name="Goodman H.M."/>
            <person name="Somerville C.R."/>
            <person name="Copenhaver G.P."/>
            <person name="Preuss D."/>
            <person name="Nierman W.C."/>
            <person name="White O."/>
            <person name="Eisen J.A."/>
            <person name="Salzberg S.L."/>
            <person name="Fraser C.M."/>
            <person name="Venter J.C."/>
        </authorList>
    </citation>
    <scope>NUCLEOTIDE SEQUENCE [LARGE SCALE GENOMIC DNA]</scope>
    <source>
        <strain>cv. Columbia</strain>
    </source>
</reference>
<reference key="2">
    <citation type="journal article" date="2017" name="Plant J.">
        <title>Araport11: a complete reannotation of the Arabidopsis thaliana reference genome.</title>
        <authorList>
            <person name="Cheng C.Y."/>
            <person name="Krishnakumar V."/>
            <person name="Chan A.P."/>
            <person name="Thibaud-Nissen F."/>
            <person name="Schobel S."/>
            <person name="Town C.D."/>
        </authorList>
    </citation>
    <scope>GENOME REANNOTATION</scope>
    <source>
        <strain>cv. Columbia</strain>
    </source>
</reference>
<organism>
    <name type="scientific">Arabidopsis thaliana</name>
    <name type="common">Mouse-ear cress</name>
    <dbReference type="NCBI Taxonomy" id="3702"/>
    <lineage>
        <taxon>Eukaryota</taxon>
        <taxon>Viridiplantae</taxon>
        <taxon>Streptophyta</taxon>
        <taxon>Embryophyta</taxon>
        <taxon>Tracheophyta</taxon>
        <taxon>Spermatophyta</taxon>
        <taxon>Magnoliopsida</taxon>
        <taxon>eudicotyledons</taxon>
        <taxon>Gunneridae</taxon>
        <taxon>Pentapetalae</taxon>
        <taxon>rosids</taxon>
        <taxon>malvids</taxon>
        <taxon>Brassicales</taxon>
        <taxon>Brassicaceae</taxon>
        <taxon>Camelineae</taxon>
        <taxon>Arabidopsis</taxon>
    </lineage>
</organism>
<feature type="signal peptide" evidence="2">
    <location>
        <begin position="1"/>
        <end position="23"/>
    </location>
</feature>
<feature type="chain" id="PRO_0000413709" description="Gibberellin-regulated protein 11">
    <location>
        <begin position="24"/>
        <end position="94"/>
    </location>
</feature>
<dbReference type="EMBL" id="AC006439">
    <property type="protein sequence ID" value="AAD15495.1"/>
    <property type="status" value="ALT_SEQ"/>
    <property type="molecule type" value="Genomic_DNA"/>
</dbReference>
<dbReference type="EMBL" id="CP002685">
    <property type="protein sequence ID" value="AEC06768.1"/>
    <property type="molecule type" value="Genomic_DNA"/>
</dbReference>
<dbReference type="PIR" id="B84564">
    <property type="entry name" value="B84564"/>
</dbReference>
<dbReference type="RefSeq" id="NP_179433.2">
    <property type="nucleotide sequence ID" value="NM_127399.3"/>
</dbReference>
<dbReference type="SMR" id="F4IQJ4"/>
<dbReference type="STRING" id="3702.F4IQJ4"/>
<dbReference type="PaxDb" id="3702-AT2G18420.1"/>
<dbReference type="EnsemblPlants" id="AT2G18420.1">
    <property type="protein sequence ID" value="AT2G18420.1"/>
    <property type="gene ID" value="AT2G18420"/>
</dbReference>
<dbReference type="GeneID" id="816357"/>
<dbReference type="Gramene" id="AT2G18420.1">
    <property type="protein sequence ID" value="AT2G18420.1"/>
    <property type="gene ID" value="AT2G18420"/>
</dbReference>
<dbReference type="KEGG" id="ath:AT2G18420"/>
<dbReference type="Araport" id="AT2G18420"/>
<dbReference type="TAIR" id="AT2G18420"/>
<dbReference type="eggNOG" id="ENOG502S3Z7">
    <property type="taxonomic scope" value="Eukaryota"/>
</dbReference>
<dbReference type="HOGENOM" id="CLU_142643_1_1_1"/>
<dbReference type="InParanoid" id="F4IQJ4"/>
<dbReference type="OMA" id="DFVHADM"/>
<dbReference type="PRO" id="PR:F4IQJ4"/>
<dbReference type="Proteomes" id="UP000006548">
    <property type="component" value="Chromosome 2"/>
</dbReference>
<dbReference type="ExpressionAtlas" id="F4IQJ4">
    <property type="expression patterns" value="baseline and differential"/>
</dbReference>
<dbReference type="GO" id="GO:0005576">
    <property type="term" value="C:extracellular region"/>
    <property type="evidence" value="ECO:0007669"/>
    <property type="project" value="UniProtKB-SubCell"/>
</dbReference>
<dbReference type="GO" id="GO:0009740">
    <property type="term" value="P:gibberellic acid mediated signaling pathway"/>
    <property type="evidence" value="ECO:0007669"/>
    <property type="project" value="UniProtKB-KW"/>
</dbReference>
<dbReference type="InterPro" id="IPR003854">
    <property type="entry name" value="GASA"/>
</dbReference>
<dbReference type="PANTHER" id="PTHR23201">
    <property type="entry name" value="EXTENSIN, PROLINE-RICH PROTEIN"/>
    <property type="match status" value="1"/>
</dbReference>
<dbReference type="PANTHER" id="PTHR23201:SF2">
    <property type="entry name" value="GIBBERELLIN-REGULATED PROTEIN 1-RELATED"/>
    <property type="match status" value="1"/>
</dbReference>
<dbReference type="Pfam" id="PF02704">
    <property type="entry name" value="GASA"/>
    <property type="match status" value="1"/>
</dbReference>
<gene>
    <name type="primary">GASA11</name>
    <name type="ordered locus">At2g18420</name>
    <name type="ORF">T30D6.7</name>
</gene>
<comment type="function">
    <text evidence="1">Gibberellin-regulated protein that may function in hormonal controlled steps of development such as seed germination, flowering and seed maturation.</text>
</comment>
<comment type="subcellular location">
    <subcellularLocation>
        <location evidence="1">Secreted</location>
    </subcellularLocation>
</comment>
<comment type="PTM">
    <text evidence="1">Six disulfide bonds may be present.</text>
</comment>
<comment type="similarity">
    <text evidence="3">Belongs to the GASA family.</text>
</comment>
<comment type="sequence caution" evidence="3">
    <conflict type="erroneous gene model prediction">
        <sequence resource="EMBL-CDS" id="AAD15495"/>
    </conflict>
</comment>
<keyword id="KW-1015">Disulfide bond</keyword>
<keyword id="KW-0939">Gibberellin signaling pathway</keyword>
<keyword id="KW-1185">Reference proteome</keyword>
<keyword id="KW-0964">Secreted</keyword>
<keyword id="KW-0732">Signal</keyword>
<accession>F4IQJ4</accession>
<accession>Q9ZPX4</accession>
<sequence>MAVFRVLLASLLISLLVLDFVHADMVTSNDAPKIDCNSRCQERCSLSSRPNLCHRACGTCCARCNCVAPGTSGNYDKCPCYGSLTTHGGRRKCP</sequence>